<accession>Q820I0</accession>
<organism>
    <name type="scientific">Nitrosomonas europaea (strain ATCC 19718 / CIP 103999 / KCTC 2705 / NBRC 14298)</name>
    <dbReference type="NCBI Taxonomy" id="228410"/>
    <lineage>
        <taxon>Bacteria</taxon>
        <taxon>Pseudomonadati</taxon>
        <taxon>Pseudomonadota</taxon>
        <taxon>Betaproteobacteria</taxon>
        <taxon>Nitrosomonadales</taxon>
        <taxon>Nitrosomonadaceae</taxon>
        <taxon>Nitrosomonas</taxon>
    </lineage>
</organism>
<protein>
    <recommendedName>
        <fullName evidence="1">Ribonuclease 3</fullName>
        <ecNumber evidence="1">3.1.26.3</ecNumber>
    </recommendedName>
    <alternativeName>
        <fullName evidence="1">Ribonuclease III</fullName>
        <shortName evidence="1">RNase III</shortName>
    </alternativeName>
</protein>
<sequence length="245" mass="27286">MTSSRPIAHNTKNKQTKTLKGRDYAVFLQKLGYTFKQPDLLREALTHRSLGFPNNERFEFLGDSVLNCAVSTLLFKRFPSLPEGDLTRLRANFVNQQALHRLASALGIGELILLGEGERKSGGHHRPSILANAVEAIIGAIYLESGFAVVEQVIVALYEPLIRQLDPDTSGKDSKTLLQEYLQSRKIALPEYSVLLAQGDPHAQVFHVECVIPGFGIRTRGEGTSRRRAEQEAARQAYELAIVRH</sequence>
<gene>
    <name evidence="1" type="primary">rnc</name>
    <name type="ordered locus">NE2324</name>
</gene>
<dbReference type="EC" id="3.1.26.3" evidence="1"/>
<dbReference type="EMBL" id="AL954747">
    <property type="protein sequence ID" value="CAD86236.1"/>
    <property type="molecule type" value="Genomic_DNA"/>
</dbReference>
<dbReference type="RefSeq" id="WP_011112808.1">
    <property type="nucleotide sequence ID" value="NC_004757.1"/>
</dbReference>
<dbReference type="SMR" id="Q820I0"/>
<dbReference type="STRING" id="228410.NE2324"/>
<dbReference type="GeneID" id="87105455"/>
<dbReference type="KEGG" id="neu:NE2324"/>
<dbReference type="eggNOG" id="COG0571">
    <property type="taxonomic scope" value="Bacteria"/>
</dbReference>
<dbReference type="HOGENOM" id="CLU_000907_1_1_4"/>
<dbReference type="OrthoDB" id="9805026at2"/>
<dbReference type="PhylomeDB" id="Q820I0"/>
<dbReference type="Proteomes" id="UP000001416">
    <property type="component" value="Chromosome"/>
</dbReference>
<dbReference type="GO" id="GO:0005737">
    <property type="term" value="C:cytoplasm"/>
    <property type="evidence" value="ECO:0007669"/>
    <property type="project" value="UniProtKB-SubCell"/>
</dbReference>
<dbReference type="GO" id="GO:0003725">
    <property type="term" value="F:double-stranded RNA binding"/>
    <property type="evidence" value="ECO:0007669"/>
    <property type="project" value="TreeGrafter"/>
</dbReference>
<dbReference type="GO" id="GO:0046872">
    <property type="term" value="F:metal ion binding"/>
    <property type="evidence" value="ECO:0007669"/>
    <property type="project" value="UniProtKB-KW"/>
</dbReference>
<dbReference type="GO" id="GO:0004525">
    <property type="term" value="F:ribonuclease III activity"/>
    <property type="evidence" value="ECO:0007669"/>
    <property type="project" value="UniProtKB-UniRule"/>
</dbReference>
<dbReference type="GO" id="GO:0019843">
    <property type="term" value="F:rRNA binding"/>
    <property type="evidence" value="ECO:0007669"/>
    <property type="project" value="UniProtKB-KW"/>
</dbReference>
<dbReference type="GO" id="GO:0006397">
    <property type="term" value="P:mRNA processing"/>
    <property type="evidence" value="ECO:0007669"/>
    <property type="project" value="UniProtKB-UniRule"/>
</dbReference>
<dbReference type="GO" id="GO:0010468">
    <property type="term" value="P:regulation of gene expression"/>
    <property type="evidence" value="ECO:0007669"/>
    <property type="project" value="TreeGrafter"/>
</dbReference>
<dbReference type="GO" id="GO:0006364">
    <property type="term" value="P:rRNA processing"/>
    <property type="evidence" value="ECO:0007669"/>
    <property type="project" value="UniProtKB-UniRule"/>
</dbReference>
<dbReference type="GO" id="GO:0008033">
    <property type="term" value="P:tRNA processing"/>
    <property type="evidence" value="ECO:0007669"/>
    <property type="project" value="UniProtKB-KW"/>
</dbReference>
<dbReference type="CDD" id="cd10845">
    <property type="entry name" value="DSRM_RNAse_III_family"/>
    <property type="match status" value="1"/>
</dbReference>
<dbReference type="CDD" id="cd00593">
    <property type="entry name" value="RIBOc"/>
    <property type="match status" value="1"/>
</dbReference>
<dbReference type="FunFam" id="1.10.1520.10:FF:000001">
    <property type="entry name" value="Ribonuclease 3"/>
    <property type="match status" value="1"/>
</dbReference>
<dbReference type="FunFam" id="3.30.160.20:FF:000003">
    <property type="entry name" value="Ribonuclease 3"/>
    <property type="match status" value="1"/>
</dbReference>
<dbReference type="Gene3D" id="3.30.160.20">
    <property type="match status" value="1"/>
</dbReference>
<dbReference type="Gene3D" id="1.10.1520.10">
    <property type="entry name" value="Ribonuclease III domain"/>
    <property type="match status" value="1"/>
</dbReference>
<dbReference type="HAMAP" id="MF_00104">
    <property type="entry name" value="RNase_III"/>
    <property type="match status" value="1"/>
</dbReference>
<dbReference type="InterPro" id="IPR014720">
    <property type="entry name" value="dsRBD_dom"/>
</dbReference>
<dbReference type="InterPro" id="IPR011907">
    <property type="entry name" value="RNase_III"/>
</dbReference>
<dbReference type="InterPro" id="IPR000999">
    <property type="entry name" value="RNase_III_dom"/>
</dbReference>
<dbReference type="InterPro" id="IPR036389">
    <property type="entry name" value="RNase_III_sf"/>
</dbReference>
<dbReference type="NCBIfam" id="TIGR02191">
    <property type="entry name" value="RNaseIII"/>
    <property type="match status" value="1"/>
</dbReference>
<dbReference type="PANTHER" id="PTHR11207:SF0">
    <property type="entry name" value="RIBONUCLEASE 3"/>
    <property type="match status" value="1"/>
</dbReference>
<dbReference type="PANTHER" id="PTHR11207">
    <property type="entry name" value="RIBONUCLEASE III"/>
    <property type="match status" value="1"/>
</dbReference>
<dbReference type="Pfam" id="PF00035">
    <property type="entry name" value="dsrm"/>
    <property type="match status" value="1"/>
</dbReference>
<dbReference type="Pfam" id="PF14622">
    <property type="entry name" value="Ribonucleas_3_3"/>
    <property type="match status" value="1"/>
</dbReference>
<dbReference type="SMART" id="SM00358">
    <property type="entry name" value="DSRM"/>
    <property type="match status" value="1"/>
</dbReference>
<dbReference type="SMART" id="SM00535">
    <property type="entry name" value="RIBOc"/>
    <property type="match status" value="1"/>
</dbReference>
<dbReference type="SUPFAM" id="SSF54768">
    <property type="entry name" value="dsRNA-binding domain-like"/>
    <property type="match status" value="1"/>
</dbReference>
<dbReference type="SUPFAM" id="SSF69065">
    <property type="entry name" value="RNase III domain-like"/>
    <property type="match status" value="1"/>
</dbReference>
<dbReference type="PROSITE" id="PS50137">
    <property type="entry name" value="DS_RBD"/>
    <property type="match status" value="1"/>
</dbReference>
<dbReference type="PROSITE" id="PS00517">
    <property type="entry name" value="RNASE_3_1"/>
    <property type="match status" value="1"/>
</dbReference>
<dbReference type="PROSITE" id="PS50142">
    <property type="entry name" value="RNASE_3_2"/>
    <property type="match status" value="1"/>
</dbReference>
<evidence type="ECO:0000255" key="1">
    <source>
        <dbReference type="HAMAP-Rule" id="MF_00104"/>
    </source>
</evidence>
<comment type="function">
    <text evidence="1">Digests double-stranded RNA. Involved in the processing of primary rRNA transcript to yield the immediate precursors to the large and small rRNAs (23S and 16S). Processes some mRNAs, and tRNAs when they are encoded in the rRNA operon. Processes pre-crRNA and tracrRNA of type II CRISPR loci if present in the organism.</text>
</comment>
<comment type="catalytic activity">
    <reaction evidence="1">
        <text>Endonucleolytic cleavage to 5'-phosphomonoester.</text>
        <dbReference type="EC" id="3.1.26.3"/>
    </reaction>
</comment>
<comment type="cofactor">
    <cofactor evidence="1">
        <name>Mg(2+)</name>
        <dbReference type="ChEBI" id="CHEBI:18420"/>
    </cofactor>
</comment>
<comment type="subunit">
    <text evidence="1">Homodimer.</text>
</comment>
<comment type="subcellular location">
    <subcellularLocation>
        <location evidence="1">Cytoplasm</location>
    </subcellularLocation>
</comment>
<comment type="similarity">
    <text evidence="1">Belongs to the ribonuclease III family.</text>
</comment>
<name>RNC_NITEU</name>
<reference key="1">
    <citation type="journal article" date="2003" name="J. Bacteriol.">
        <title>Complete genome sequence of the ammonia-oxidizing bacterium and obligate chemolithoautotroph Nitrosomonas europaea.</title>
        <authorList>
            <person name="Chain P."/>
            <person name="Lamerdin J.E."/>
            <person name="Larimer F.W."/>
            <person name="Regala W."/>
            <person name="Lao V."/>
            <person name="Land M.L."/>
            <person name="Hauser L."/>
            <person name="Hooper A.B."/>
            <person name="Klotz M.G."/>
            <person name="Norton J."/>
            <person name="Sayavedra-Soto L.A."/>
            <person name="Arciero D.M."/>
            <person name="Hommes N.G."/>
            <person name="Whittaker M.M."/>
            <person name="Arp D.J."/>
        </authorList>
    </citation>
    <scope>NUCLEOTIDE SEQUENCE [LARGE SCALE GENOMIC DNA]</scope>
    <source>
        <strain>ATCC 19718 / CIP 103999 / KCTC 2705 / NBRC 14298</strain>
    </source>
</reference>
<proteinExistence type="inferred from homology"/>
<keyword id="KW-0963">Cytoplasm</keyword>
<keyword id="KW-0255">Endonuclease</keyword>
<keyword id="KW-0378">Hydrolase</keyword>
<keyword id="KW-0460">Magnesium</keyword>
<keyword id="KW-0479">Metal-binding</keyword>
<keyword id="KW-0507">mRNA processing</keyword>
<keyword id="KW-0540">Nuclease</keyword>
<keyword id="KW-1185">Reference proteome</keyword>
<keyword id="KW-0694">RNA-binding</keyword>
<keyword id="KW-0698">rRNA processing</keyword>
<keyword id="KW-0699">rRNA-binding</keyword>
<keyword id="KW-0819">tRNA processing</keyword>
<feature type="chain" id="PRO_0000228556" description="Ribonuclease 3">
    <location>
        <begin position="1"/>
        <end position="245"/>
    </location>
</feature>
<feature type="domain" description="RNase III" evidence="1">
    <location>
        <begin position="24"/>
        <end position="146"/>
    </location>
</feature>
<feature type="domain" description="DRBM" evidence="1">
    <location>
        <begin position="173"/>
        <end position="243"/>
    </location>
</feature>
<feature type="active site" evidence="1">
    <location>
        <position position="63"/>
    </location>
</feature>
<feature type="active site" evidence="1">
    <location>
        <position position="135"/>
    </location>
</feature>
<feature type="binding site" evidence="1">
    <location>
        <position position="59"/>
    </location>
    <ligand>
        <name>Mg(2+)</name>
        <dbReference type="ChEBI" id="CHEBI:18420"/>
    </ligand>
</feature>
<feature type="binding site" evidence="1">
    <location>
        <position position="132"/>
    </location>
    <ligand>
        <name>Mg(2+)</name>
        <dbReference type="ChEBI" id="CHEBI:18420"/>
    </ligand>
</feature>
<feature type="binding site" evidence="1">
    <location>
        <position position="135"/>
    </location>
    <ligand>
        <name>Mg(2+)</name>
        <dbReference type="ChEBI" id="CHEBI:18420"/>
    </ligand>
</feature>